<sequence length="471" mass="52358">MSVLKEYRTVSEVVGPLMIVDQVAGVHYNELVDITLHNGERRKGQVLEVQGDKAMVQLFEGSTGINLAKTKVRFTGHPLELAVSEDMVGRIFDGMGQPIDGGPELIPEKYLDIDGQAINPVARDYPDEFIQTGISAIDHLNTLVRGQKLPVFSGSGLPHNELAAQIARQATVLNSDDNFAVVFAAMGITFEEAEFFMNDLRETGAIDRSVLFINLANDPAIERIATPRIALTTAEYLAYEKGMHVLVIMTDMTNYCEALREVSAARREVPGRRGYPGYLYTNLSTLYERAGRLIGKKGSVTQIPILTMPEDDITHPIPDLTGYITEGQIILSQELYKNGFRPPINVLPSLSRLKDKGSGEGKTRQDHAATMNQLFAAYAQGKQAKELAVVLGESALSETDKLYVAFTNRFEEEYINQGFYTNRSIEESLDLGWELLSILPRTELKRIKDDMLDRYLPKADTTMTKVFVAND</sequence>
<organism>
    <name type="scientific">Streptococcus pyogenes serotype M12 (strain MGAS2096)</name>
    <dbReference type="NCBI Taxonomy" id="370553"/>
    <lineage>
        <taxon>Bacteria</taxon>
        <taxon>Bacillati</taxon>
        <taxon>Bacillota</taxon>
        <taxon>Bacilli</taxon>
        <taxon>Lactobacillales</taxon>
        <taxon>Streptococcaceae</taxon>
        <taxon>Streptococcus</taxon>
    </lineage>
</organism>
<evidence type="ECO:0000255" key="1">
    <source>
        <dbReference type="HAMAP-Rule" id="MF_00310"/>
    </source>
</evidence>
<gene>
    <name evidence="1" type="primary">atpB</name>
    <name type="ordered locus">MGAS2096_Spy0137</name>
</gene>
<feature type="chain" id="PRO_1000059390" description="V-type ATP synthase beta chain">
    <location>
        <begin position="1"/>
        <end position="471"/>
    </location>
</feature>
<comment type="function">
    <text evidence="1">Produces ATP from ADP in the presence of a proton gradient across the membrane. The V-type beta chain is a regulatory subunit.</text>
</comment>
<comment type="similarity">
    <text evidence="1">Belongs to the ATPase alpha/beta chains family.</text>
</comment>
<proteinExistence type="inferred from homology"/>
<dbReference type="EMBL" id="CP000261">
    <property type="protein sequence ID" value="ABF35189.1"/>
    <property type="molecule type" value="Genomic_DNA"/>
</dbReference>
<dbReference type="SMR" id="Q1JDW9"/>
<dbReference type="KEGG" id="spj:MGAS2096_Spy0137"/>
<dbReference type="HOGENOM" id="CLU_022916_0_0_9"/>
<dbReference type="GO" id="GO:0005524">
    <property type="term" value="F:ATP binding"/>
    <property type="evidence" value="ECO:0007669"/>
    <property type="project" value="UniProtKB-UniRule"/>
</dbReference>
<dbReference type="GO" id="GO:0046933">
    <property type="term" value="F:proton-transporting ATP synthase activity, rotational mechanism"/>
    <property type="evidence" value="ECO:0007669"/>
    <property type="project" value="UniProtKB-UniRule"/>
</dbReference>
<dbReference type="GO" id="GO:0042777">
    <property type="term" value="P:proton motive force-driven plasma membrane ATP synthesis"/>
    <property type="evidence" value="ECO:0007669"/>
    <property type="project" value="UniProtKB-UniRule"/>
</dbReference>
<dbReference type="CDD" id="cd18112">
    <property type="entry name" value="ATP-synt_V_A-type_beta_C"/>
    <property type="match status" value="1"/>
</dbReference>
<dbReference type="CDD" id="cd18118">
    <property type="entry name" value="ATP-synt_V_A-type_beta_N"/>
    <property type="match status" value="1"/>
</dbReference>
<dbReference type="CDD" id="cd01135">
    <property type="entry name" value="V_A-ATPase_B"/>
    <property type="match status" value="1"/>
</dbReference>
<dbReference type="Gene3D" id="3.40.50.12240">
    <property type="match status" value="1"/>
</dbReference>
<dbReference type="HAMAP" id="MF_00310">
    <property type="entry name" value="ATP_synth_B_arch"/>
    <property type="match status" value="1"/>
</dbReference>
<dbReference type="InterPro" id="IPR055190">
    <property type="entry name" value="ATP-synt_VA_C"/>
</dbReference>
<dbReference type="InterPro" id="IPR020003">
    <property type="entry name" value="ATPase_a/bsu_AS"/>
</dbReference>
<dbReference type="InterPro" id="IPR004100">
    <property type="entry name" value="ATPase_F1/V1/A1_a/bsu_N"/>
</dbReference>
<dbReference type="InterPro" id="IPR000194">
    <property type="entry name" value="ATPase_F1/V1/A1_a/bsu_nucl-bd"/>
</dbReference>
<dbReference type="InterPro" id="IPR027417">
    <property type="entry name" value="P-loop_NTPase"/>
</dbReference>
<dbReference type="InterPro" id="IPR022879">
    <property type="entry name" value="V-ATPase_su_B/beta"/>
</dbReference>
<dbReference type="NCBIfam" id="NF003235">
    <property type="entry name" value="PRK04196.1"/>
    <property type="match status" value="1"/>
</dbReference>
<dbReference type="PANTHER" id="PTHR43389">
    <property type="entry name" value="V-TYPE PROTON ATPASE SUBUNIT B"/>
    <property type="match status" value="1"/>
</dbReference>
<dbReference type="PANTHER" id="PTHR43389:SF4">
    <property type="entry name" value="V-TYPE PROTON ATPASE SUBUNIT B"/>
    <property type="match status" value="1"/>
</dbReference>
<dbReference type="Pfam" id="PF00006">
    <property type="entry name" value="ATP-synt_ab"/>
    <property type="match status" value="1"/>
</dbReference>
<dbReference type="Pfam" id="PF02874">
    <property type="entry name" value="ATP-synt_ab_N"/>
    <property type="match status" value="1"/>
</dbReference>
<dbReference type="Pfam" id="PF22919">
    <property type="entry name" value="ATP-synt_VA_C"/>
    <property type="match status" value="1"/>
</dbReference>
<dbReference type="PIRSF" id="PIRSF039114">
    <property type="entry name" value="V-ATPsynth_beta/V-ATPase_B"/>
    <property type="match status" value="1"/>
</dbReference>
<dbReference type="SUPFAM" id="SSF47917">
    <property type="entry name" value="C-terminal domain of alpha and beta subunits of F1 ATP synthase"/>
    <property type="match status" value="1"/>
</dbReference>
<dbReference type="SUPFAM" id="SSF52540">
    <property type="entry name" value="P-loop containing nucleoside triphosphate hydrolases"/>
    <property type="match status" value="1"/>
</dbReference>
<dbReference type="PROSITE" id="PS00152">
    <property type="entry name" value="ATPASE_ALPHA_BETA"/>
    <property type="match status" value="1"/>
</dbReference>
<accession>Q1JDW9</accession>
<name>VATB_STRPB</name>
<keyword id="KW-0066">ATP synthesis</keyword>
<keyword id="KW-0375">Hydrogen ion transport</keyword>
<keyword id="KW-0406">Ion transport</keyword>
<keyword id="KW-0813">Transport</keyword>
<protein>
    <recommendedName>
        <fullName evidence="1">V-type ATP synthase beta chain</fullName>
    </recommendedName>
    <alternativeName>
        <fullName evidence="1">V-ATPase subunit B</fullName>
    </alternativeName>
</protein>
<reference key="1">
    <citation type="journal article" date="2006" name="Proc. Natl. Acad. Sci. U.S.A.">
        <title>Molecular genetic anatomy of inter- and intraserotype variation in the human bacterial pathogen group A Streptococcus.</title>
        <authorList>
            <person name="Beres S.B."/>
            <person name="Richter E.W."/>
            <person name="Nagiec M.J."/>
            <person name="Sumby P."/>
            <person name="Porcella S.F."/>
            <person name="DeLeo F.R."/>
            <person name="Musser J.M."/>
        </authorList>
    </citation>
    <scope>NUCLEOTIDE SEQUENCE [LARGE SCALE GENOMIC DNA]</scope>
    <source>
        <strain>MGAS2096</strain>
    </source>
</reference>